<feature type="chain" id="PRO_1000064433" description="Der GTPase-activating protein YihI">
    <location>
        <begin position="1"/>
        <end position="181"/>
    </location>
</feature>
<feature type="region of interest" description="Disordered" evidence="2">
    <location>
        <begin position="1"/>
        <end position="73"/>
    </location>
</feature>
<feature type="compositionally biased region" description="Basic and acidic residues" evidence="2">
    <location>
        <begin position="22"/>
        <end position="32"/>
    </location>
</feature>
<feature type="compositionally biased region" description="Basic residues" evidence="2">
    <location>
        <begin position="33"/>
        <end position="42"/>
    </location>
</feature>
<feature type="compositionally biased region" description="Basic and acidic residues" evidence="2">
    <location>
        <begin position="55"/>
        <end position="67"/>
    </location>
</feature>
<evidence type="ECO:0000255" key="1">
    <source>
        <dbReference type="HAMAP-Rule" id="MF_01058"/>
    </source>
</evidence>
<evidence type="ECO:0000256" key="2">
    <source>
        <dbReference type="SAM" id="MobiDB-lite"/>
    </source>
</evidence>
<organism>
    <name type="scientific">Aliivibrio fischeri (strain ATCC 700601 / ES114)</name>
    <name type="common">Vibrio fischeri</name>
    <dbReference type="NCBI Taxonomy" id="312309"/>
    <lineage>
        <taxon>Bacteria</taxon>
        <taxon>Pseudomonadati</taxon>
        <taxon>Pseudomonadota</taxon>
        <taxon>Gammaproteobacteria</taxon>
        <taxon>Vibrionales</taxon>
        <taxon>Vibrionaceae</taxon>
        <taxon>Aliivibrio</taxon>
    </lineage>
</organism>
<dbReference type="EMBL" id="CP000020">
    <property type="protein sequence ID" value="AAW84573.1"/>
    <property type="molecule type" value="Genomic_DNA"/>
</dbReference>
<dbReference type="RefSeq" id="WP_011260950.1">
    <property type="nucleotide sequence ID" value="NC_006840.2"/>
</dbReference>
<dbReference type="RefSeq" id="YP_203461.1">
    <property type="nucleotide sequence ID" value="NC_006840.2"/>
</dbReference>
<dbReference type="SMR" id="Q5E8S3"/>
<dbReference type="STRING" id="312309.VF_0078"/>
<dbReference type="EnsemblBacteria" id="AAW84573">
    <property type="protein sequence ID" value="AAW84573"/>
    <property type="gene ID" value="VF_0078"/>
</dbReference>
<dbReference type="GeneID" id="54162706"/>
<dbReference type="KEGG" id="vfi:VF_0078"/>
<dbReference type="PATRIC" id="fig|312309.11.peg.78"/>
<dbReference type="eggNOG" id="COG3078">
    <property type="taxonomic scope" value="Bacteria"/>
</dbReference>
<dbReference type="HOGENOM" id="CLU_094104_1_0_6"/>
<dbReference type="OrthoDB" id="5677577at2"/>
<dbReference type="Proteomes" id="UP000000537">
    <property type="component" value="Chromosome I"/>
</dbReference>
<dbReference type="GO" id="GO:0005096">
    <property type="term" value="F:GTPase activator activity"/>
    <property type="evidence" value="ECO:0007669"/>
    <property type="project" value="UniProtKB-KW"/>
</dbReference>
<dbReference type="GO" id="GO:0042254">
    <property type="term" value="P:ribosome biogenesis"/>
    <property type="evidence" value="ECO:0007669"/>
    <property type="project" value="UniProtKB-KW"/>
</dbReference>
<dbReference type="HAMAP" id="MF_01058">
    <property type="entry name" value="GAP_YihI"/>
    <property type="match status" value="1"/>
</dbReference>
<dbReference type="InterPro" id="IPR007336">
    <property type="entry name" value="YihI"/>
</dbReference>
<dbReference type="NCBIfam" id="NF003560">
    <property type="entry name" value="PRK05244.1-1"/>
    <property type="match status" value="1"/>
</dbReference>
<dbReference type="Pfam" id="PF04220">
    <property type="entry name" value="YihI"/>
    <property type="match status" value="1"/>
</dbReference>
<gene>
    <name evidence="1" type="primary">yihI</name>
    <name type="ordered locus">VF_0078</name>
</gene>
<reference key="1">
    <citation type="journal article" date="2005" name="Proc. Natl. Acad. Sci. U.S.A.">
        <title>Complete genome sequence of Vibrio fischeri: a symbiotic bacterium with pathogenic congeners.</title>
        <authorList>
            <person name="Ruby E.G."/>
            <person name="Urbanowski M."/>
            <person name="Campbell J."/>
            <person name="Dunn A."/>
            <person name="Faini M."/>
            <person name="Gunsalus R."/>
            <person name="Lostroh P."/>
            <person name="Lupp C."/>
            <person name="McCann J."/>
            <person name="Millikan D."/>
            <person name="Schaefer A."/>
            <person name="Stabb E."/>
            <person name="Stevens A."/>
            <person name="Visick K."/>
            <person name="Whistler C."/>
            <person name="Greenberg E.P."/>
        </authorList>
    </citation>
    <scope>NUCLEOTIDE SEQUENCE [LARGE SCALE GENOMIC DNA]</scope>
    <source>
        <strain>ATCC 700601 / ES114</strain>
    </source>
</reference>
<sequence length="181" mass="20895">MSRIKKARKPGMSSQPVVVTRNRTDRDVESREIKRKRKRKGLKAGARNAESNAEQARRNAQKKDPRIGSKKPIQLVVEAKQKTTKQERRLTNEQELAMLENDAQLMVLLDRLDSGENLGTGLQKYVDEKLARIEHLMGRLGLLDDEEPEEIEEFPEFAERKAKSDDDLLAEFDDFNMDDFK</sequence>
<proteinExistence type="inferred from homology"/>
<name>YIHI_ALIF1</name>
<comment type="function">
    <text evidence="1">A GTPase-activating protein (GAP) that modifies Der/EngA GTPase function. May play a role in ribosome biogenesis.</text>
</comment>
<comment type="subunit">
    <text evidence="1">Interacts with Der.</text>
</comment>
<comment type="similarity">
    <text evidence="1">Belongs to the YihI family.</text>
</comment>
<accession>Q5E8S3</accession>
<keyword id="KW-0343">GTPase activation</keyword>
<keyword id="KW-1185">Reference proteome</keyword>
<keyword id="KW-0690">Ribosome biogenesis</keyword>
<protein>
    <recommendedName>
        <fullName evidence="1">Der GTPase-activating protein YihI</fullName>
    </recommendedName>
</protein>